<accession>Q0HL88</accession>
<gene>
    <name evidence="1" type="primary">ribH</name>
    <name type="ordered locus">Shewmr4_1099</name>
</gene>
<dbReference type="EC" id="2.5.1.78" evidence="1"/>
<dbReference type="EMBL" id="CP000446">
    <property type="protein sequence ID" value="ABI38179.1"/>
    <property type="molecule type" value="Genomic_DNA"/>
</dbReference>
<dbReference type="SMR" id="Q0HL88"/>
<dbReference type="KEGG" id="she:Shewmr4_1099"/>
<dbReference type="HOGENOM" id="CLU_089358_1_1_6"/>
<dbReference type="UniPathway" id="UPA00275">
    <property type="reaction ID" value="UER00404"/>
</dbReference>
<dbReference type="GO" id="GO:0005829">
    <property type="term" value="C:cytosol"/>
    <property type="evidence" value="ECO:0007669"/>
    <property type="project" value="TreeGrafter"/>
</dbReference>
<dbReference type="GO" id="GO:0009349">
    <property type="term" value="C:riboflavin synthase complex"/>
    <property type="evidence" value="ECO:0007669"/>
    <property type="project" value="InterPro"/>
</dbReference>
<dbReference type="GO" id="GO:0000906">
    <property type="term" value="F:6,7-dimethyl-8-ribityllumazine synthase activity"/>
    <property type="evidence" value="ECO:0007669"/>
    <property type="project" value="UniProtKB-UniRule"/>
</dbReference>
<dbReference type="GO" id="GO:0009231">
    <property type="term" value="P:riboflavin biosynthetic process"/>
    <property type="evidence" value="ECO:0007669"/>
    <property type="project" value="UniProtKB-UniRule"/>
</dbReference>
<dbReference type="CDD" id="cd09209">
    <property type="entry name" value="Lumazine_synthase-I"/>
    <property type="match status" value="1"/>
</dbReference>
<dbReference type="FunFam" id="3.40.50.960:FF:000001">
    <property type="entry name" value="6,7-dimethyl-8-ribityllumazine synthase"/>
    <property type="match status" value="1"/>
</dbReference>
<dbReference type="Gene3D" id="3.40.50.960">
    <property type="entry name" value="Lumazine/riboflavin synthase"/>
    <property type="match status" value="1"/>
</dbReference>
<dbReference type="HAMAP" id="MF_00178">
    <property type="entry name" value="Lumazine_synth"/>
    <property type="match status" value="1"/>
</dbReference>
<dbReference type="InterPro" id="IPR034964">
    <property type="entry name" value="LS"/>
</dbReference>
<dbReference type="InterPro" id="IPR002180">
    <property type="entry name" value="LS/RS"/>
</dbReference>
<dbReference type="InterPro" id="IPR036467">
    <property type="entry name" value="LS/RS_sf"/>
</dbReference>
<dbReference type="NCBIfam" id="TIGR00114">
    <property type="entry name" value="lumazine-synth"/>
    <property type="match status" value="1"/>
</dbReference>
<dbReference type="NCBIfam" id="NF000812">
    <property type="entry name" value="PRK00061.1-4"/>
    <property type="match status" value="1"/>
</dbReference>
<dbReference type="PANTHER" id="PTHR21058:SF0">
    <property type="entry name" value="6,7-DIMETHYL-8-RIBITYLLUMAZINE SYNTHASE"/>
    <property type="match status" value="1"/>
</dbReference>
<dbReference type="PANTHER" id="PTHR21058">
    <property type="entry name" value="6,7-DIMETHYL-8-RIBITYLLUMAZINE SYNTHASE DMRL SYNTHASE LUMAZINE SYNTHASE"/>
    <property type="match status" value="1"/>
</dbReference>
<dbReference type="Pfam" id="PF00885">
    <property type="entry name" value="DMRL_synthase"/>
    <property type="match status" value="1"/>
</dbReference>
<dbReference type="SUPFAM" id="SSF52121">
    <property type="entry name" value="Lumazine synthase"/>
    <property type="match status" value="1"/>
</dbReference>
<name>RISB_SHESM</name>
<evidence type="ECO:0000255" key="1">
    <source>
        <dbReference type="HAMAP-Rule" id="MF_00178"/>
    </source>
</evidence>
<sequence>MNVVQGNIEAKNAKVAIVISRFNSFLVESLLEGALDTLKRFGQVSDENITVVRVPGAVELPLAARRVAASGKFDGIIALGAVIRGGTPHFDFVAGECNKGLAQIALEFDLPVAFGVLTTDTIEQAIERSGTKAGNKGGEAALSLLEMVNVLQQLEQQL</sequence>
<reference key="1">
    <citation type="submission" date="2006-08" db="EMBL/GenBank/DDBJ databases">
        <title>Complete sequence of Shewanella sp. MR-4.</title>
        <authorList>
            <consortium name="US DOE Joint Genome Institute"/>
            <person name="Copeland A."/>
            <person name="Lucas S."/>
            <person name="Lapidus A."/>
            <person name="Barry K."/>
            <person name="Detter J.C."/>
            <person name="Glavina del Rio T."/>
            <person name="Hammon N."/>
            <person name="Israni S."/>
            <person name="Dalin E."/>
            <person name="Tice H."/>
            <person name="Pitluck S."/>
            <person name="Kiss H."/>
            <person name="Brettin T."/>
            <person name="Bruce D."/>
            <person name="Han C."/>
            <person name="Tapia R."/>
            <person name="Gilna P."/>
            <person name="Schmutz J."/>
            <person name="Larimer F."/>
            <person name="Land M."/>
            <person name="Hauser L."/>
            <person name="Kyrpides N."/>
            <person name="Mikhailova N."/>
            <person name="Nealson K."/>
            <person name="Konstantinidis K."/>
            <person name="Klappenbach J."/>
            <person name="Tiedje J."/>
            <person name="Richardson P."/>
        </authorList>
    </citation>
    <scope>NUCLEOTIDE SEQUENCE [LARGE SCALE GENOMIC DNA]</scope>
    <source>
        <strain>MR-4</strain>
    </source>
</reference>
<feature type="chain" id="PRO_1000040513" description="6,7-dimethyl-8-ribityllumazine synthase">
    <location>
        <begin position="1"/>
        <end position="158"/>
    </location>
</feature>
<feature type="active site" description="Proton donor" evidence="1">
    <location>
        <position position="89"/>
    </location>
</feature>
<feature type="binding site" evidence="1">
    <location>
        <position position="22"/>
    </location>
    <ligand>
        <name>5-amino-6-(D-ribitylamino)uracil</name>
        <dbReference type="ChEBI" id="CHEBI:15934"/>
    </ligand>
</feature>
<feature type="binding site" evidence="1">
    <location>
        <begin position="57"/>
        <end position="59"/>
    </location>
    <ligand>
        <name>5-amino-6-(D-ribitylamino)uracil</name>
        <dbReference type="ChEBI" id="CHEBI:15934"/>
    </ligand>
</feature>
<feature type="binding site" evidence="1">
    <location>
        <begin position="81"/>
        <end position="83"/>
    </location>
    <ligand>
        <name>5-amino-6-(D-ribitylamino)uracil</name>
        <dbReference type="ChEBI" id="CHEBI:15934"/>
    </ligand>
</feature>
<feature type="binding site" evidence="1">
    <location>
        <begin position="86"/>
        <end position="87"/>
    </location>
    <ligand>
        <name>(2S)-2-hydroxy-3-oxobutyl phosphate</name>
        <dbReference type="ChEBI" id="CHEBI:58830"/>
    </ligand>
</feature>
<feature type="binding site" evidence="1">
    <location>
        <position position="114"/>
    </location>
    <ligand>
        <name>5-amino-6-(D-ribitylamino)uracil</name>
        <dbReference type="ChEBI" id="CHEBI:15934"/>
    </ligand>
</feature>
<feature type="binding site" evidence="1">
    <location>
        <position position="128"/>
    </location>
    <ligand>
        <name>(2S)-2-hydroxy-3-oxobutyl phosphate</name>
        <dbReference type="ChEBI" id="CHEBI:58830"/>
    </ligand>
</feature>
<keyword id="KW-0686">Riboflavin biosynthesis</keyword>
<keyword id="KW-0808">Transferase</keyword>
<protein>
    <recommendedName>
        <fullName evidence="1">6,7-dimethyl-8-ribityllumazine synthase</fullName>
        <shortName evidence="1">DMRL synthase</shortName>
        <shortName evidence="1">LS</shortName>
        <shortName evidence="1">Lumazine synthase</shortName>
        <ecNumber evidence="1">2.5.1.78</ecNumber>
    </recommendedName>
</protein>
<comment type="function">
    <text evidence="1">Catalyzes the formation of 6,7-dimethyl-8-ribityllumazine by condensation of 5-amino-6-(D-ribitylamino)uracil with 3,4-dihydroxy-2-butanone 4-phosphate. This is the penultimate step in the biosynthesis of riboflavin.</text>
</comment>
<comment type="catalytic activity">
    <reaction evidence="1">
        <text>(2S)-2-hydroxy-3-oxobutyl phosphate + 5-amino-6-(D-ribitylamino)uracil = 6,7-dimethyl-8-(1-D-ribityl)lumazine + phosphate + 2 H2O + H(+)</text>
        <dbReference type="Rhea" id="RHEA:26152"/>
        <dbReference type="ChEBI" id="CHEBI:15377"/>
        <dbReference type="ChEBI" id="CHEBI:15378"/>
        <dbReference type="ChEBI" id="CHEBI:15934"/>
        <dbReference type="ChEBI" id="CHEBI:43474"/>
        <dbReference type="ChEBI" id="CHEBI:58201"/>
        <dbReference type="ChEBI" id="CHEBI:58830"/>
        <dbReference type="EC" id="2.5.1.78"/>
    </reaction>
</comment>
<comment type="pathway">
    <text evidence="1">Cofactor biosynthesis; riboflavin biosynthesis; riboflavin from 2-hydroxy-3-oxobutyl phosphate and 5-amino-6-(D-ribitylamino)uracil: step 1/2.</text>
</comment>
<comment type="subunit">
    <text evidence="1">Forms an icosahedral capsid composed of 60 subunits, arranged as a dodecamer of pentamers.</text>
</comment>
<comment type="similarity">
    <text evidence="1">Belongs to the DMRL synthase family.</text>
</comment>
<organism>
    <name type="scientific">Shewanella sp. (strain MR-4)</name>
    <dbReference type="NCBI Taxonomy" id="60480"/>
    <lineage>
        <taxon>Bacteria</taxon>
        <taxon>Pseudomonadati</taxon>
        <taxon>Pseudomonadota</taxon>
        <taxon>Gammaproteobacteria</taxon>
        <taxon>Alteromonadales</taxon>
        <taxon>Shewanellaceae</taxon>
        <taxon>Shewanella</taxon>
    </lineage>
</organism>
<proteinExistence type="inferred from homology"/>